<proteinExistence type="inferred from homology"/>
<sequence length="336" mass="36314">MLFDAALLLSFGGPDGPEQVRPFLENVTRGCNVPPERLDEVTKHYLHFGGVSPINGINLALVNELQVELDLPVYFGNRNWEPYIEDSVVTMRDDGIRCAAVFITSAWSGYSSCTRYVEAIARARRRAGTGAPNLVKLRPYFDHPLFVEMFVDAITAAAASLPAALRSEARLVFTAHSVPVATDRRCGPALYSRQVGYAARLVAAGAGYADYDLTWQSRSGPPYVPWLAPDVGDQLMTLASAGTKAVIVCPIGFVADHIEVVWDLDHELRSQADAAGVAFARAATPNADRRFARLAASLIDELTHDRVPVRVNGSDPVPGCLASINGVPCDLPHCVA</sequence>
<protein>
    <recommendedName>
        <fullName evidence="1">Coproporphyrin III ferrochelatase</fullName>
        <ecNumber evidence="1">4.99.1.9</ecNumber>
    </recommendedName>
</protein>
<feature type="chain" id="PRO_0000175165" description="Coproporphyrin III ferrochelatase">
    <location>
        <begin position="1"/>
        <end position="336"/>
    </location>
</feature>
<feature type="binding site" evidence="1">
    <location>
        <position position="52"/>
    </location>
    <ligand>
        <name>Fe-coproporphyrin III</name>
        <dbReference type="ChEBI" id="CHEBI:68438"/>
    </ligand>
</feature>
<feature type="binding site" evidence="1">
    <location>
        <position position="116"/>
    </location>
    <ligand>
        <name>Fe-coproporphyrin III</name>
        <dbReference type="ChEBI" id="CHEBI:68438"/>
    </ligand>
</feature>
<feature type="binding site" evidence="1">
    <location>
        <position position="176"/>
    </location>
    <ligand>
        <name>Fe(2+)</name>
        <dbReference type="ChEBI" id="CHEBI:29033"/>
    </ligand>
</feature>
<feature type="binding site" evidence="1">
    <location>
        <position position="259"/>
    </location>
    <ligand>
        <name>Fe(2+)</name>
        <dbReference type="ChEBI" id="CHEBI:29033"/>
    </ligand>
</feature>
<evidence type="ECO:0000255" key="1">
    <source>
        <dbReference type="HAMAP-Rule" id="MF_00323"/>
    </source>
</evidence>
<evidence type="ECO:0000305" key="2"/>
<gene>
    <name evidence="1" type="primary">cpfC</name>
    <name type="synonym">hemH</name>
    <name type="synonym">hemZ</name>
    <name type="ordered locus">ML1805</name>
</gene>
<accession>Q9CBM2</accession>
<reference key="1">
    <citation type="journal article" date="2001" name="Nature">
        <title>Massive gene decay in the leprosy bacillus.</title>
        <authorList>
            <person name="Cole S.T."/>
            <person name="Eiglmeier K."/>
            <person name="Parkhill J."/>
            <person name="James K.D."/>
            <person name="Thomson N.R."/>
            <person name="Wheeler P.R."/>
            <person name="Honore N."/>
            <person name="Garnier T."/>
            <person name="Churcher C.M."/>
            <person name="Harris D.E."/>
            <person name="Mungall K.L."/>
            <person name="Basham D."/>
            <person name="Brown D."/>
            <person name="Chillingworth T."/>
            <person name="Connor R."/>
            <person name="Davies R.M."/>
            <person name="Devlin K."/>
            <person name="Duthoy S."/>
            <person name="Feltwell T."/>
            <person name="Fraser A."/>
            <person name="Hamlin N."/>
            <person name="Holroyd S."/>
            <person name="Hornsby T."/>
            <person name="Jagels K."/>
            <person name="Lacroix C."/>
            <person name="Maclean J."/>
            <person name="Moule S."/>
            <person name="Murphy L.D."/>
            <person name="Oliver K."/>
            <person name="Quail M.A."/>
            <person name="Rajandream M.A."/>
            <person name="Rutherford K.M."/>
            <person name="Rutter S."/>
            <person name="Seeger K."/>
            <person name="Simon S."/>
            <person name="Simmonds M."/>
            <person name="Skelton J."/>
            <person name="Squares R."/>
            <person name="Squares S."/>
            <person name="Stevens K."/>
            <person name="Taylor K."/>
            <person name="Whitehead S."/>
            <person name="Woodward J.R."/>
            <person name="Barrell B.G."/>
        </authorList>
    </citation>
    <scope>NUCLEOTIDE SEQUENCE [LARGE SCALE GENOMIC DNA]</scope>
    <source>
        <strain>TN</strain>
    </source>
</reference>
<dbReference type="EC" id="4.99.1.9" evidence="1"/>
<dbReference type="EMBL" id="AL583923">
    <property type="protein sequence ID" value="CAC30758.1"/>
    <property type="molecule type" value="Genomic_DNA"/>
</dbReference>
<dbReference type="PIR" id="F87134">
    <property type="entry name" value="F87134"/>
</dbReference>
<dbReference type="RefSeq" id="NP_302226.1">
    <property type="nucleotide sequence ID" value="NC_002677.1"/>
</dbReference>
<dbReference type="RefSeq" id="WP_010908547.1">
    <property type="nucleotide sequence ID" value="NC_002677.1"/>
</dbReference>
<dbReference type="SMR" id="Q9CBM2"/>
<dbReference type="STRING" id="272631.gene:17575652"/>
<dbReference type="KEGG" id="mle:ML1805"/>
<dbReference type="PATRIC" id="fig|272631.5.peg.3430"/>
<dbReference type="Leproma" id="ML1805"/>
<dbReference type="eggNOG" id="COG0276">
    <property type="taxonomic scope" value="Bacteria"/>
</dbReference>
<dbReference type="HOGENOM" id="CLU_018884_2_0_11"/>
<dbReference type="OrthoDB" id="9776380at2"/>
<dbReference type="UniPathway" id="UPA00252"/>
<dbReference type="Proteomes" id="UP000000806">
    <property type="component" value="Chromosome"/>
</dbReference>
<dbReference type="GO" id="GO:0005737">
    <property type="term" value="C:cytoplasm"/>
    <property type="evidence" value="ECO:0007669"/>
    <property type="project" value="UniProtKB-SubCell"/>
</dbReference>
<dbReference type="GO" id="GO:0004325">
    <property type="term" value="F:ferrochelatase activity"/>
    <property type="evidence" value="ECO:0007669"/>
    <property type="project" value="UniProtKB-UniRule"/>
</dbReference>
<dbReference type="GO" id="GO:0046872">
    <property type="term" value="F:metal ion binding"/>
    <property type="evidence" value="ECO:0007669"/>
    <property type="project" value="UniProtKB-KW"/>
</dbReference>
<dbReference type="GO" id="GO:0006783">
    <property type="term" value="P:heme biosynthetic process"/>
    <property type="evidence" value="ECO:0007669"/>
    <property type="project" value="UniProtKB-UniRule"/>
</dbReference>
<dbReference type="CDD" id="cd00419">
    <property type="entry name" value="Ferrochelatase_C"/>
    <property type="match status" value="1"/>
</dbReference>
<dbReference type="CDD" id="cd03411">
    <property type="entry name" value="Ferrochelatase_N"/>
    <property type="match status" value="1"/>
</dbReference>
<dbReference type="Gene3D" id="3.40.50.1400">
    <property type="match status" value="2"/>
</dbReference>
<dbReference type="HAMAP" id="MF_00323">
    <property type="entry name" value="Ferrochelatase"/>
    <property type="match status" value="1"/>
</dbReference>
<dbReference type="InterPro" id="IPR001015">
    <property type="entry name" value="Ferrochelatase"/>
</dbReference>
<dbReference type="InterPro" id="IPR019772">
    <property type="entry name" value="Ferrochelatase_AS"/>
</dbReference>
<dbReference type="InterPro" id="IPR033644">
    <property type="entry name" value="Ferrochelatase_C"/>
</dbReference>
<dbReference type="InterPro" id="IPR033659">
    <property type="entry name" value="Ferrochelatase_N"/>
</dbReference>
<dbReference type="NCBIfam" id="TIGR00109">
    <property type="entry name" value="hemH"/>
    <property type="match status" value="1"/>
</dbReference>
<dbReference type="NCBIfam" id="NF000689">
    <property type="entry name" value="PRK00035.2-1"/>
    <property type="match status" value="1"/>
</dbReference>
<dbReference type="PANTHER" id="PTHR11108">
    <property type="entry name" value="FERROCHELATASE"/>
    <property type="match status" value="1"/>
</dbReference>
<dbReference type="PANTHER" id="PTHR11108:SF1">
    <property type="entry name" value="FERROCHELATASE, MITOCHONDRIAL"/>
    <property type="match status" value="1"/>
</dbReference>
<dbReference type="Pfam" id="PF00762">
    <property type="entry name" value="Ferrochelatase"/>
    <property type="match status" value="1"/>
</dbReference>
<dbReference type="SUPFAM" id="SSF53800">
    <property type="entry name" value="Chelatase"/>
    <property type="match status" value="1"/>
</dbReference>
<dbReference type="PROSITE" id="PS00534">
    <property type="entry name" value="FERROCHELATASE"/>
    <property type="match status" value="1"/>
</dbReference>
<name>CPFC_MYCLE</name>
<keyword id="KW-0963">Cytoplasm</keyword>
<keyword id="KW-0350">Heme biosynthesis</keyword>
<keyword id="KW-0408">Iron</keyword>
<keyword id="KW-0456">Lyase</keyword>
<keyword id="KW-0479">Metal-binding</keyword>
<keyword id="KW-0627">Porphyrin biosynthesis</keyword>
<keyword id="KW-1185">Reference proteome</keyword>
<comment type="function">
    <text evidence="1">Involved in coproporphyrin-dependent heme b biosynthesis. Catalyzes the insertion of ferrous iron into coproporphyrin III to form Fe-coproporphyrin III.</text>
</comment>
<comment type="catalytic activity">
    <reaction evidence="1">
        <text>Fe-coproporphyrin III + 2 H(+) = coproporphyrin III + Fe(2+)</text>
        <dbReference type="Rhea" id="RHEA:49572"/>
        <dbReference type="ChEBI" id="CHEBI:15378"/>
        <dbReference type="ChEBI" id="CHEBI:29033"/>
        <dbReference type="ChEBI" id="CHEBI:68438"/>
        <dbReference type="ChEBI" id="CHEBI:131725"/>
        <dbReference type="EC" id="4.99.1.9"/>
    </reaction>
    <physiologicalReaction direction="right-to-left" evidence="1">
        <dbReference type="Rhea" id="RHEA:49574"/>
    </physiologicalReaction>
</comment>
<comment type="pathway">
    <text evidence="1">Porphyrin-containing compound metabolism; protoheme biosynthesis.</text>
</comment>
<comment type="subcellular location">
    <subcellularLocation>
        <location evidence="1">Cytoplasm</location>
    </subcellularLocation>
</comment>
<comment type="similarity">
    <text evidence="1 2">Belongs to the ferrochelatase family.</text>
</comment>
<organism>
    <name type="scientific">Mycobacterium leprae (strain TN)</name>
    <dbReference type="NCBI Taxonomy" id="272631"/>
    <lineage>
        <taxon>Bacteria</taxon>
        <taxon>Bacillati</taxon>
        <taxon>Actinomycetota</taxon>
        <taxon>Actinomycetes</taxon>
        <taxon>Mycobacteriales</taxon>
        <taxon>Mycobacteriaceae</taxon>
        <taxon>Mycobacterium</taxon>
    </lineage>
</organism>